<evidence type="ECO:0000255" key="1">
    <source>
        <dbReference type="HAMAP-Rule" id="MF_01554"/>
    </source>
</evidence>
<protein>
    <recommendedName>
        <fullName evidence="1">Phosphoglucosamine mutase</fullName>
        <ecNumber evidence="1">5.4.2.10</ecNumber>
    </recommendedName>
</protein>
<keyword id="KW-0413">Isomerase</keyword>
<keyword id="KW-0460">Magnesium</keyword>
<keyword id="KW-0479">Metal-binding</keyword>
<keyword id="KW-0597">Phosphoprotein</keyword>
<feature type="chain" id="PRO_1000087760" description="Phosphoglucosamine mutase">
    <location>
        <begin position="1"/>
        <end position="449"/>
    </location>
</feature>
<feature type="active site" description="Phosphoserine intermediate" evidence="1">
    <location>
        <position position="105"/>
    </location>
</feature>
<feature type="binding site" description="via phosphate group" evidence="1">
    <location>
        <position position="105"/>
    </location>
    <ligand>
        <name>Mg(2+)</name>
        <dbReference type="ChEBI" id="CHEBI:18420"/>
    </ligand>
</feature>
<feature type="binding site" evidence="1">
    <location>
        <position position="242"/>
    </location>
    <ligand>
        <name>Mg(2+)</name>
        <dbReference type="ChEBI" id="CHEBI:18420"/>
    </ligand>
</feature>
<feature type="binding site" evidence="1">
    <location>
        <position position="244"/>
    </location>
    <ligand>
        <name>Mg(2+)</name>
        <dbReference type="ChEBI" id="CHEBI:18420"/>
    </ligand>
</feature>
<feature type="binding site" evidence="1">
    <location>
        <position position="246"/>
    </location>
    <ligand>
        <name>Mg(2+)</name>
        <dbReference type="ChEBI" id="CHEBI:18420"/>
    </ligand>
</feature>
<feature type="modified residue" description="Phosphoserine" evidence="1">
    <location>
        <position position="105"/>
    </location>
</feature>
<organism>
    <name type="scientific">Clavibacter sepedonicus</name>
    <name type="common">Clavibacter michiganensis subsp. sepedonicus</name>
    <dbReference type="NCBI Taxonomy" id="31964"/>
    <lineage>
        <taxon>Bacteria</taxon>
        <taxon>Bacillati</taxon>
        <taxon>Actinomycetota</taxon>
        <taxon>Actinomycetes</taxon>
        <taxon>Micrococcales</taxon>
        <taxon>Microbacteriaceae</taxon>
        <taxon>Clavibacter</taxon>
    </lineage>
</organism>
<gene>
    <name evidence="1" type="primary">glmM</name>
    <name type="ordered locus">CMS0322</name>
</gene>
<dbReference type="EC" id="5.4.2.10" evidence="1"/>
<dbReference type="EMBL" id="AM849034">
    <property type="protein sequence ID" value="CAQ00443.1"/>
    <property type="molecule type" value="Genomic_DNA"/>
</dbReference>
<dbReference type="RefSeq" id="WP_012297783.1">
    <property type="nucleotide sequence ID" value="NZ_MZMN01000003.1"/>
</dbReference>
<dbReference type="SMR" id="B0RB78"/>
<dbReference type="STRING" id="31964.CMS0322"/>
<dbReference type="KEGG" id="cms:CMS0322"/>
<dbReference type="eggNOG" id="COG1109">
    <property type="taxonomic scope" value="Bacteria"/>
</dbReference>
<dbReference type="HOGENOM" id="CLU_016950_7_0_11"/>
<dbReference type="OrthoDB" id="9803322at2"/>
<dbReference type="Proteomes" id="UP000001318">
    <property type="component" value="Chromosome"/>
</dbReference>
<dbReference type="GO" id="GO:0005829">
    <property type="term" value="C:cytosol"/>
    <property type="evidence" value="ECO:0007669"/>
    <property type="project" value="TreeGrafter"/>
</dbReference>
<dbReference type="GO" id="GO:0000287">
    <property type="term" value="F:magnesium ion binding"/>
    <property type="evidence" value="ECO:0007669"/>
    <property type="project" value="UniProtKB-UniRule"/>
</dbReference>
<dbReference type="GO" id="GO:0008966">
    <property type="term" value="F:phosphoglucosamine mutase activity"/>
    <property type="evidence" value="ECO:0007669"/>
    <property type="project" value="UniProtKB-UniRule"/>
</dbReference>
<dbReference type="GO" id="GO:0004615">
    <property type="term" value="F:phosphomannomutase activity"/>
    <property type="evidence" value="ECO:0007669"/>
    <property type="project" value="TreeGrafter"/>
</dbReference>
<dbReference type="GO" id="GO:0005975">
    <property type="term" value="P:carbohydrate metabolic process"/>
    <property type="evidence" value="ECO:0007669"/>
    <property type="project" value="InterPro"/>
</dbReference>
<dbReference type="GO" id="GO:0009252">
    <property type="term" value="P:peptidoglycan biosynthetic process"/>
    <property type="evidence" value="ECO:0007669"/>
    <property type="project" value="TreeGrafter"/>
</dbReference>
<dbReference type="GO" id="GO:0006048">
    <property type="term" value="P:UDP-N-acetylglucosamine biosynthetic process"/>
    <property type="evidence" value="ECO:0007669"/>
    <property type="project" value="TreeGrafter"/>
</dbReference>
<dbReference type="CDD" id="cd05802">
    <property type="entry name" value="GlmM"/>
    <property type="match status" value="1"/>
</dbReference>
<dbReference type="FunFam" id="3.30.310.50:FF:000001">
    <property type="entry name" value="Phosphoglucosamine mutase"/>
    <property type="match status" value="1"/>
</dbReference>
<dbReference type="FunFam" id="3.40.120.10:FF:000001">
    <property type="entry name" value="Phosphoglucosamine mutase"/>
    <property type="match status" value="1"/>
</dbReference>
<dbReference type="FunFam" id="3.40.120.10:FF:000002">
    <property type="entry name" value="Phosphoglucosamine mutase"/>
    <property type="match status" value="1"/>
</dbReference>
<dbReference type="Gene3D" id="3.40.120.10">
    <property type="entry name" value="Alpha-D-Glucose-1,6-Bisphosphate, subunit A, domain 3"/>
    <property type="match status" value="3"/>
</dbReference>
<dbReference type="Gene3D" id="3.30.310.50">
    <property type="entry name" value="Alpha-D-phosphohexomutase, C-terminal domain"/>
    <property type="match status" value="1"/>
</dbReference>
<dbReference type="HAMAP" id="MF_01554_B">
    <property type="entry name" value="GlmM_B"/>
    <property type="match status" value="1"/>
</dbReference>
<dbReference type="InterPro" id="IPR005844">
    <property type="entry name" value="A-D-PHexomutase_a/b/a-I"/>
</dbReference>
<dbReference type="InterPro" id="IPR016055">
    <property type="entry name" value="A-D-PHexomutase_a/b/a-I/II/III"/>
</dbReference>
<dbReference type="InterPro" id="IPR005845">
    <property type="entry name" value="A-D-PHexomutase_a/b/a-II"/>
</dbReference>
<dbReference type="InterPro" id="IPR005846">
    <property type="entry name" value="A-D-PHexomutase_a/b/a-III"/>
</dbReference>
<dbReference type="InterPro" id="IPR005843">
    <property type="entry name" value="A-D-PHexomutase_C"/>
</dbReference>
<dbReference type="InterPro" id="IPR036900">
    <property type="entry name" value="A-D-PHexomutase_C_sf"/>
</dbReference>
<dbReference type="InterPro" id="IPR016066">
    <property type="entry name" value="A-D-PHexomutase_CS"/>
</dbReference>
<dbReference type="InterPro" id="IPR005841">
    <property type="entry name" value="Alpha-D-phosphohexomutase_SF"/>
</dbReference>
<dbReference type="InterPro" id="IPR006352">
    <property type="entry name" value="GlmM_bact"/>
</dbReference>
<dbReference type="InterPro" id="IPR050060">
    <property type="entry name" value="Phosphoglucosamine_mutase"/>
</dbReference>
<dbReference type="NCBIfam" id="TIGR01455">
    <property type="entry name" value="glmM"/>
    <property type="match status" value="1"/>
</dbReference>
<dbReference type="NCBIfam" id="NF008139">
    <property type="entry name" value="PRK10887.1"/>
    <property type="match status" value="1"/>
</dbReference>
<dbReference type="PANTHER" id="PTHR42946:SF1">
    <property type="entry name" value="PHOSPHOGLUCOMUTASE (ALPHA-D-GLUCOSE-1,6-BISPHOSPHATE-DEPENDENT)"/>
    <property type="match status" value="1"/>
</dbReference>
<dbReference type="PANTHER" id="PTHR42946">
    <property type="entry name" value="PHOSPHOHEXOSE MUTASE"/>
    <property type="match status" value="1"/>
</dbReference>
<dbReference type="Pfam" id="PF02878">
    <property type="entry name" value="PGM_PMM_I"/>
    <property type="match status" value="1"/>
</dbReference>
<dbReference type="Pfam" id="PF02879">
    <property type="entry name" value="PGM_PMM_II"/>
    <property type="match status" value="1"/>
</dbReference>
<dbReference type="Pfam" id="PF02880">
    <property type="entry name" value="PGM_PMM_III"/>
    <property type="match status" value="1"/>
</dbReference>
<dbReference type="Pfam" id="PF00408">
    <property type="entry name" value="PGM_PMM_IV"/>
    <property type="match status" value="1"/>
</dbReference>
<dbReference type="PRINTS" id="PR00509">
    <property type="entry name" value="PGMPMM"/>
</dbReference>
<dbReference type="SUPFAM" id="SSF55957">
    <property type="entry name" value="Phosphoglucomutase, C-terminal domain"/>
    <property type="match status" value="1"/>
</dbReference>
<dbReference type="SUPFAM" id="SSF53738">
    <property type="entry name" value="Phosphoglucomutase, first 3 domains"/>
    <property type="match status" value="3"/>
</dbReference>
<dbReference type="PROSITE" id="PS00710">
    <property type="entry name" value="PGM_PMM"/>
    <property type="match status" value="1"/>
</dbReference>
<accession>B0RB78</accession>
<name>GLMM_CLASE</name>
<sequence length="449" mass="46957">MPRLFGTDGVRGLANGETITADLALRLAQAAAHVLGQDARDAGRRPVAVVARDPRVSGEFIAAAVAAGLASSGVDVFDAGVIPTPATAYLIADFDADFGVMISASHNPAPDNGIKFFAAGGRKLADELEDRIEAQLSQPVLLPTGADVGRIRRFADAEDRYVLHLLGTLQHRLDGIHVVLDCAHGAAAGISPEVSTDAGARVTVIGNDPDGMNINDRVGSTHLDLLAEAVLGHGADVGIAYDGDADRCLAVDHTGAIIDGDQIMAVLALSMARRGLLVERTLVATVMSNLGLRIAMAENDITVLQTRVGDRYVLEAMNEGGYSLGGEQSGHLVIAEHATTGDGILTGIQLLGEMAATGRSLHELASVMTVYPQVMINVRGVDRERVSDDAELNAAVARAEAELGDTGRILMRASGTEPMIRVMVEAADQATAERHAQELAALVTERLAI</sequence>
<reference key="1">
    <citation type="journal article" date="2008" name="J. Bacteriol.">
        <title>Genome of the actinomycete plant pathogen Clavibacter michiganensis subsp. sepedonicus suggests recent niche adaptation.</title>
        <authorList>
            <person name="Bentley S.D."/>
            <person name="Corton C."/>
            <person name="Brown S.E."/>
            <person name="Barron A."/>
            <person name="Clark L."/>
            <person name="Doggett J."/>
            <person name="Harris B."/>
            <person name="Ormond D."/>
            <person name="Quail M.A."/>
            <person name="May G."/>
            <person name="Francis D."/>
            <person name="Knudson D."/>
            <person name="Parkhill J."/>
            <person name="Ishimaru C.A."/>
        </authorList>
    </citation>
    <scope>NUCLEOTIDE SEQUENCE [LARGE SCALE GENOMIC DNA]</scope>
    <source>
        <strain>ATCC 33113 / DSM 20744 / JCM 9667 / LMG 2889 / ICMP 2535 / C-1</strain>
    </source>
</reference>
<comment type="function">
    <text evidence="1">Catalyzes the conversion of glucosamine-6-phosphate to glucosamine-1-phosphate.</text>
</comment>
<comment type="catalytic activity">
    <reaction evidence="1">
        <text>alpha-D-glucosamine 1-phosphate = D-glucosamine 6-phosphate</text>
        <dbReference type="Rhea" id="RHEA:23424"/>
        <dbReference type="ChEBI" id="CHEBI:58516"/>
        <dbReference type="ChEBI" id="CHEBI:58725"/>
        <dbReference type="EC" id="5.4.2.10"/>
    </reaction>
</comment>
<comment type="cofactor">
    <cofactor evidence="1">
        <name>Mg(2+)</name>
        <dbReference type="ChEBI" id="CHEBI:18420"/>
    </cofactor>
    <text evidence="1">Binds 1 Mg(2+) ion per subunit.</text>
</comment>
<comment type="PTM">
    <text evidence="1">Activated by phosphorylation.</text>
</comment>
<comment type="similarity">
    <text evidence="1">Belongs to the phosphohexose mutase family.</text>
</comment>
<proteinExistence type="inferred from homology"/>